<sequence length="245" mass="26013">MIIPALDLIDGTVVRLHQGDYGKQRDYGNNPLPRLQDYAAQGAEVLHLVDLTGAKDPAKRQIPLIKTLVAGVNVPVQVGGGVRSEKDVAALLEAGVARVVVGSTAVKSPEMVKGWFERFGADALVLALDVRIDEQGNKQVAVSGWQENSGVSLEQLVETYLPVGLKHVLCTDISRDGTLAGSNVSLYEEVCARYPQVAFQSSGGIGDINDVAALRGTGVRGVIVGRALLEGKFTVKEAIACWQNA</sequence>
<accession>Q8FG49</accession>
<reference key="1">
    <citation type="journal article" date="2002" name="Proc. Natl. Acad. Sci. U.S.A.">
        <title>Extensive mosaic structure revealed by the complete genome sequence of uropathogenic Escherichia coli.</title>
        <authorList>
            <person name="Welch R.A."/>
            <person name="Burland V."/>
            <person name="Plunkett G. III"/>
            <person name="Redford P."/>
            <person name="Roesch P."/>
            <person name="Rasko D."/>
            <person name="Buckles E.L."/>
            <person name="Liou S.-R."/>
            <person name="Boutin A."/>
            <person name="Hackett J."/>
            <person name="Stroud D."/>
            <person name="Mayhew G.F."/>
            <person name="Rose D.J."/>
            <person name="Zhou S."/>
            <person name="Schwartz D.C."/>
            <person name="Perna N.T."/>
            <person name="Mobley H.L.T."/>
            <person name="Donnenberg M.S."/>
            <person name="Blattner F.R."/>
        </authorList>
    </citation>
    <scope>NUCLEOTIDE SEQUENCE [LARGE SCALE GENOMIC DNA]</scope>
    <source>
        <strain>CFT073 / ATCC 700928 / UPEC</strain>
    </source>
</reference>
<proteinExistence type="inferred from homology"/>
<dbReference type="EC" id="5.3.1.16" evidence="2"/>
<dbReference type="EMBL" id="AE014075">
    <property type="protein sequence ID" value="AAN81006.1"/>
    <property type="status" value="ALT_INIT"/>
    <property type="molecule type" value="Genomic_DNA"/>
</dbReference>
<dbReference type="RefSeq" id="WP_000586497.1">
    <property type="nucleotide sequence ID" value="NZ_CP051263.1"/>
</dbReference>
<dbReference type="SMR" id="Q8FG49"/>
<dbReference type="STRING" id="199310.c2551"/>
<dbReference type="KEGG" id="ecc:c2551"/>
<dbReference type="eggNOG" id="COG0106">
    <property type="taxonomic scope" value="Bacteria"/>
</dbReference>
<dbReference type="HOGENOM" id="CLU_048577_1_2_6"/>
<dbReference type="UniPathway" id="UPA00031">
    <property type="reaction ID" value="UER00009"/>
</dbReference>
<dbReference type="Proteomes" id="UP000001410">
    <property type="component" value="Chromosome"/>
</dbReference>
<dbReference type="GO" id="GO:0005737">
    <property type="term" value="C:cytoplasm"/>
    <property type="evidence" value="ECO:0007669"/>
    <property type="project" value="UniProtKB-SubCell"/>
</dbReference>
<dbReference type="GO" id="GO:0003949">
    <property type="term" value="F:1-(5-phosphoribosyl)-5-[(5-phosphoribosylamino)methylideneamino]imidazole-4-carboxamide isomerase activity"/>
    <property type="evidence" value="ECO:0007669"/>
    <property type="project" value="UniProtKB-UniRule"/>
</dbReference>
<dbReference type="GO" id="GO:0000105">
    <property type="term" value="P:L-histidine biosynthetic process"/>
    <property type="evidence" value="ECO:0007669"/>
    <property type="project" value="UniProtKB-UniRule"/>
</dbReference>
<dbReference type="GO" id="GO:0000162">
    <property type="term" value="P:L-tryptophan biosynthetic process"/>
    <property type="evidence" value="ECO:0007669"/>
    <property type="project" value="TreeGrafter"/>
</dbReference>
<dbReference type="CDD" id="cd04732">
    <property type="entry name" value="HisA"/>
    <property type="match status" value="1"/>
</dbReference>
<dbReference type="FunFam" id="3.20.20.70:FF:000009">
    <property type="entry name" value="1-(5-phosphoribosyl)-5-[(5-phosphoribosylamino)methylideneamino] imidazole-4-carboxamide isomerase"/>
    <property type="match status" value="1"/>
</dbReference>
<dbReference type="Gene3D" id="3.20.20.70">
    <property type="entry name" value="Aldolase class I"/>
    <property type="match status" value="1"/>
</dbReference>
<dbReference type="HAMAP" id="MF_01014">
    <property type="entry name" value="HisA"/>
    <property type="match status" value="1"/>
</dbReference>
<dbReference type="InterPro" id="IPR013785">
    <property type="entry name" value="Aldolase_TIM"/>
</dbReference>
<dbReference type="InterPro" id="IPR006062">
    <property type="entry name" value="His_biosynth"/>
</dbReference>
<dbReference type="InterPro" id="IPR006063">
    <property type="entry name" value="HisA_bact_arch"/>
</dbReference>
<dbReference type="InterPro" id="IPR044524">
    <property type="entry name" value="Isoase_HisA-like"/>
</dbReference>
<dbReference type="InterPro" id="IPR023016">
    <property type="entry name" value="Isoase_HisA-like_bact"/>
</dbReference>
<dbReference type="InterPro" id="IPR011060">
    <property type="entry name" value="RibuloseP-bd_barrel"/>
</dbReference>
<dbReference type="NCBIfam" id="TIGR00007">
    <property type="entry name" value="1-(5-phosphoribosyl)-5-[(5-phosphoribosylamino)methylideneamino]imidazole-4-carboxamide isomerase"/>
    <property type="match status" value="1"/>
</dbReference>
<dbReference type="PANTHER" id="PTHR43090">
    <property type="entry name" value="1-(5-PHOSPHORIBOSYL)-5-[(5-PHOSPHORIBOSYLAMINO)METHYLIDENEAMINO] IMIDAZOLE-4-CARBOXAMIDE ISOMERASE"/>
    <property type="match status" value="1"/>
</dbReference>
<dbReference type="PANTHER" id="PTHR43090:SF2">
    <property type="entry name" value="1-(5-PHOSPHORIBOSYL)-5-[(5-PHOSPHORIBOSYLAMINO)METHYLIDENEAMINO] IMIDAZOLE-4-CARBOXAMIDE ISOMERASE"/>
    <property type="match status" value="1"/>
</dbReference>
<dbReference type="Pfam" id="PF00977">
    <property type="entry name" value="His_biosynth"/>
    <property type="match status" value="1"/>
</dbReference>
<dbReference type="SUPFAM" id="SSF51366">
    <property type="entry name" value="Ribulose-phoshate binding barrel"/>
    <property type="match status" value="1"/>
</dbReference>
<evidence type="ECO:0000250" key="1"/>
<evidence type="ECO:0000255" key="2">
    <source>
        <dbReference type="HAMAP-Rule" id="MF_01014"/>
    </source>
</evidence>
<evidence type="ECO:0000305" key="3"/>
<keyword id="KW-0028">Amino-acid biosynthesis</keyword>
<keyword id="KW-0963">Cytoplasm</keyword>
<keyword id="KW-0368">Histidine biosynthesis</keyword>
<keyword id="KW-0413">Isomerase</keyword>
<keyword id="KW-1185">Reference proteome</keyword>
<name>HIS4_ECOL6</name>
<organism>
    <name type="scientific">Escherichia coli O6:H1 (strain CFT073 / ATCC 700928 / UPEC)</name>
    <dbReference type="NCBI Taxonomy" id="199310"/>
    <lineage>
        <taxon>Bacteria</taxon>
        <taxon>Pseudomonadati</taxon>
        <taxon>Pseudomonadota</taxon>
        <taxon>Gammaproteobacteria</taxon>
        <taxon>Enterobacterales</taxon>
        <taxon>Enterobacteriaceae</taxon>
        <taxon>Escherichia</taxon>
    </lineage>
</organism>
<gene>
    <name evidence="2" type="primary">hisA</name>
    <name type="ordered locus">c2551</name>
</gene>
<comment type="catalytic activity">
    <reaction evidence="2">
        <text>1-(5-phospho-beta-D-ribosyl)-5-[(5-phospho-beta-D-ribosylamino)methylideneamino]imidazole-4-carboxamide = 5-[(5-phospho-1-deoxy-D-ribulos-1-ylimino)methylamino]-1-(5-phospho-beta-D-ribosyl)imidazole-4-carboxamide</text>
        <dbReference type="Rhea" id="RHEA:15469"/>
        <dbReference type="ChEBI" id="CHEBI:58435"/>
        <dbReference type="ChEBI" id="CHEBI:58525"/>
        <dbReference type="EC" id="5.3.1.16"/>
    </reaction>
</comment>
<comment type="pathway">
    <text evidence="2">Amino-acid biosynthesis; L-histidine biosynthesis; L-histidine from 5-phospho-alpha-D-ribose 1-diphosphate: step 4/9.</text>
</comment>
<comment type="subunit">
    <text evidence="1">Monomer.</text>
</comment>
<comment type="subcellular location">
    <subcellularLocation>
        <location evidence="2">Cytoplasm</location>
    </subcellularLocation>
</comment>
<comment type="similarity">
    <text evidence="2">Belongs to the HisA/HisF family.</text>
</comment>
<comment type="sequence caution" evidence="3">
    <conflict type="erroneous initiation">
        <sequence resource="EMBL-CDS" id="AAN81006"/>
    </conflict>
</comment>
<feature type="chain" id="PRO_0000142005" description="1-(5-phosphoribosyl)-5-[(5-phosphoribosylamino)methylideneamino] imidazole-4-carboxamide isomerase">
    <location>
        <begin position="1"/>
        <end position="245"/>
    </location>
</feature>
<feature type="active site" description="Proton acceptor" evidence="2">
    <location>
        <position position="7"/>
    </location>
</feature>
<feature type="active site" description="Proton donor" evidence="2">
    <location>
        <position position="129"/>
    </location>
</feature>
<protein>
    <recommendedName>
        <fullName evidence="2">1-(5-phosphoribosyl)-5-[(5-phosphoribosylamino)methylideneamino] imidazole-4-carboxamide isomerase</fullName>
        <ecNumber evidence="2">5.3.1.16</ecNumber>
    </recommendedName>
    <alternativeName>
        <fullName evidence="2">Phosphoribosylformimino-5-aminoimidazole carboxamide ribotide isomerase</fullName>
    </alternativeName>
</protein>